<name>DNS2A_MOUSE</name>
<evidence type="ECO:0000250" key="1"/>
<evidence type="ECO:0000255" key="2"/>
<evidence type="ECO:0000269" key="3">
    <source>
    </source>
</evidence>
<evidence type="ECO:0000269" key="4">
    <source>
    </source>
</evidence>
<evidence type="ECO:0000305" key="5"/>
<organism>
    <name type="scientific">Mus musculus</name>
    <name type="common">Mouse</name>
    <dbReference type="NCBI Taxonomy" id="10090"/>
    <lineage>
        <taxon>Eukaryota</taxon>
        <taxon>Metazoa</taxon>
        <taxon>Chordata</taxon>
        <taxon>Craniata</taxon>
        <taxon>Vertebrata</taxon>
        <taxon>Euteleostomi</taxon>
        <taxon>Mammalia</taxon>
        <taxon>Eutheria</taxon>
        <taxon>Euarchontoglires</taxon>
        <taxon>Glires</taxon>
        <taxon>Rodentia</taxon>
        <taxon>Myomorpha</taxon>
        <taxon>Muroidea</taxon>
        <taxon>Muridae</taxon>
        <taxon>Murinae</taxon>
        <taxon>Mus</taxon>
        <taxon>Mus</taxon>
    </lineage>
</organism>
<proteinExistence type="evidence at protein level"/>
<sequence>MATLRSLLLAALLWVPAEALSCYGDSGQPVDWFVVYKLPAHSGSRDTPKGLTYKYMDQNSDGWQDGVGYINSSEGAVGRSLQPLYRKNSSQLAFLLYNDQPPKSSSARDSTGHGHTKGVLLLDQEGGFWLVHSVPRFPPPASSGAYTWPPNAQTFGQTLLCVSLPFTQFARIGKQLTYTYPLVYDHKLEGFFAQKLPDLETVIKNQHVLHEPWNSSVILTSQAGATFQSFAKFGKFGDDLYSGWLAEALGTNLQVQFWQNSPGILPSNCSGAYQVLDVTQTGFPGPSRLTFSATEDHSKWCVAPQGPWACVGDMNRNKAETHRGGGTVCTQLPSFWKAFQSLVKDWKPCIEGS</sequence>
<protein>
    <recommendedName>
        <fullName>Deoxyribonuclease-2-alpha</fullName>
        <ecNumber>3.1.22.1</ecNumber>
    </recommendedName>
    <alternativeName>
        <fullName>Acid DNase</fullName>
    </alternativeName>
    <alternativeName>
        <fullName>Deoxyribonuclease II alpha</fullName>
        <shortName>DNase II alpha</shortName>
    </alternativeName>
    <alternativeName>
        <fullName>Lysosomal DNase II</fullName>
    </alternativeName>
</protein>
<keyword id="KW-0053">Apoptosis</keyword>
<keyword id="KW-0217">Developmental protein</keyword>
<keyword id="KW-1015">Disulfide bond</keyword>
<keyword id="KW-0255">Endonuclease</keyword>
<keyword id="KW-0325">Glycoprotein</keyword>
<keyword id="KW-0378">Hydrolase</keyword>
<keyword id="KW-0458">Lysosome</keyword>
<keyword id="KW-0540">Nuclease</keyword>
<keyword id="KW-1185">Reference proteome</keyword>
<keyword id="KW-0732">Signal</keyword>
<accession>P56542</accession>
<accession>O55053</accession>
<reference key="1">
    <citation type="journal article" date="1998" name="Gene">
        <title>Molecular cloning and characterization of human and murine DNase II.</title>
        <authorList>
            <person name="Baker K.P."/>
            <person name="Baron W.F."/>
            <person name="Henzel W.J."/>
            <person name="Spencer S.A."/>
        </authorList>
    </citation>
    <scope>NUCLEOTIDE SEQUENCE [MRNA]</scope>
</reference>
<reference key="2">
    <citation type="journal article" date="2000" name="Gene">
        <title>Deoxyribonuclease II: structure and chromosomal localization of the murine gene, and comparison with the genomic structure of the human and three C. elegans homologs.</title>
        <authorList>
            <person name="Krieser R.J."/>
            <person name="Eastman A."/>
        </authorList>
    </citation>
    <scope>NUCLEOTIDE SEQUENCE [GENOMIC DNA]</scope>
</reference>
<reference key="3">
    <citation type="journal article" date="2004" name="Genome Res.">
        <title>The status, quality, and expansion of the NIH full-length cDNA project: the Mammalian Gene Collection (MGC).</title>
        <authorList>
            <consortium name="The MGC Project Team"/>
        </authorList>
    </citation>
    <scope>NUCLEOTIDE SEQUENCE [LARGE SCALE MRNA]</scope>
    <source>
        <strain>C57BL/6J</strain>
        <tissue>Brain</tissue>
    </source>
</reference>
<reference key="4">
    <citation type="journal article" date="2001" name="Science">
        <title>Requirement of DNase II for definitive erythropoiesis in the mouse fetal liver.</title>
        <authorList>
            <person name="Kawane K."/>
            <person name="Fukuyama H."/>
            <person name="Kondoh G."/>
            <person name="Takeda J."/>
            <person name="Ohsawa Y."/>
            <person name="Uchiyama Y."/>
            <person name="Nagata S."/>
        </authorList>
    </citation>
    <scope>FUNCTION</scope>
    <scope>TISSUE SPECIFICITY</scope>
    <scope>INVOLVEMENT IN FATAL ANEMIA</scope>
</reference>
<reference key="5">
    <citation type="journal article" date="2002" name="Cell Death Differ.">
        <title>Deoxyribonuclease IIalpha is required during the phagocytic phase of apoptosis and its loss causes perinatal lethality.</title>
        <authorList>
            <person name="Krieser R.J."/>
            <person name="MacLea K.S."/>
            <person name="Longnecker D.S."/>
            <person name="Fields J.L."/>
            <person name="Fiering S."/>
            <person name="Eastman A."/>
        </authorList>
    </citation>
    <scope>FUNCTION</scope>
    <scope>INVOLVEMENT IN PERINATAL LETHALITY</scope>
</reference>
<reference key="6">
    <citation type="journal article" date="2010" name="Cell">
        <title>A tissue-specific atlas of mouse protein phosphorylation and expression.</title>
        <authorList>
            <person name="Huttlin E.L."/>
            <person name="Jedrychowski M.P."/>
            <person name="Elias J.E."/>
            <person name="Goswami T."/>
            <person name="Rad R."/>
            <person name="Beausoleil S.A."/>
            <person name="Villen J."/>
            <person name="Haas W."/>
            <person name="Sowa M.E."/>
            <person name="Gygi S.P."/>
        </authorList>
    </citation>
    <scope>IDENTIFICATION BY MASS SPECTROMETRY [LARGE SCALE ANALYSIS]</scope>
    <source>
        <tissue>Spleen</tissue>
    </source>
</reference>
<gene>
    <name type="primary">Dnase2</name>
    <name type="synonym">Dnase2a</name>
    <name type="synonym">Dnl2</name>
</gene>
<feature type="signal peptide" evidence="2">
    <location>
        <begin position="1"/>
        <end position="19"/>
    </location>
</feature>
<feature type="chain" id="PRO_0000007292" description="Deoxyribonuclease-2-alpha">
    <location>
        <begin position="20"/>
        <end position="353"/>
    </location>
</feature>
<feature type="active site" evidence="1">
    <location>
        <position position="297"/>
    </location>
</feature>
<feature type="glycosylation site" description="N-linked (GlcNAc...) asparagine" evidence="2">
    <location>
        <position position="71"/>
    </location>
</feature>
<feature type="glycosylation site" description="N-linked (GlcNAc...) asparagine" evidence="1">
    <location>
        <position position="88"/>
    </location>
</feature>
<feature type="glycosylation site" description="N-linked (GlcNAc...) asparagine" evidence="1">
    <location>
        <position position="214"/>
    </location>
</feature>
<feature type="glycosylation site" description="N-linked (GlcNAc...) asparagine" evidence="1">
    <location>
        <position position="268"/>
    </location>
</feature>
<feature type="disulfide bond" evidence="2">
    <location>
        <begin position="22"/>
        <end position="161"/>
    </location>
</feature>
<feature type="disulfide bond" evidence="2">
    <location>
        <begin position="269"/>
        <end position="349"/>
    </location>
</feature>
<feature type="disulfide bond" evidence="2">
    <location>
        <begin position="310"/>
        <end position="329"/>
    </location>
</feature>
<dbReference type="EC" id="3.1.22.1"/>
<dbReference type="EMBL" id="AF045741">
    <property type="protein sequence ID" value="AAC35750.1"/>
    <property type="molecule type" value="mRNA"/>
</dbReference>
<dbReference type="EMBL" id="AF190459">
    <property type="protein sequence ID" value="AAF20386.1"/>
    <property type="molecule type" value="Genomic_DNA"/>
</dbReference>
<dbReference type="EMBL" id="BC058609">
    <property type="protein sequence ID" value="AAH58609.1"/>
    <property type="molecule type" value="mRNA"/>
</dbReference>
<dbReference type="EMBL" id="BC060661">
    <property type="protein sequence ID" value="AAH60661.1"/>
    <property type="molecule type" value="mRNA"/>
</dbReference>
<dbReference type="CCDS" id="CCDS22484.1"/>
<dbReference type="RefSeq" id="NP_034192.1">
    <property type="nucleotide sequence ID" value="NM_010062.3"/>
</dbReference>
<dbReference type="SMR" id="P56542"/>
<dbReference type="BioGRID" id="199253">
    <property type="interactions" value="7"/>
</dbReference>
<dbReference type="FunCoup" id="P56542">
    <property type="interactions" value="358"/>
</dbReference>
<dbReference type="STRING" id="10090.ENSMUSP00000003910"/>
<dbReference type="GlyCosmos" id="P56542">
    <property type="glycosylation" value="4 sites, No reported glycans"/>
</dbReference>
<dbReference type="GlyGen" id="P56542">
    <property type="glycosylation" value="4 sites, 1 N-linked glycan (1 site)"/>
</dbReference>
<dbReference type="iPTMnet" id="P56542"/>
<dbReference type="PhosphoSitePlus" id="P56542"/>
<dbReference type="PaxDb" id="10090-ENSMUSP00000003910"/>
<dbReference type="PeptideAtlas" id="P56542"/>
<dbReference type="ProteomicsDB" id="277587"/>
<dbReference type="Pumba" id="P56542"/>
<dbReference type="Antibodypedia" id="13408">
    <property type="antibodies" value="214 antibodies from 31 providers"/>
</dbReference>
<dbReference type="Ensembl" id="ENSMUST00000003910.13">
    <property type="protein sequence ID" value="ENSMUSP00000003910.7"/>
    <property type="gene ID" value="ENSMUSG00000003812.14"/>
</dbReference>
<dbReference type="GeneID" id="13423"/>
<dbReference type="KEGG" id="mmu:13423"/>
<dbReference type="UCSC" id="uc009moa.1">
    <property type="organism name" value="mouse"/>
</dbReference>
<dbReference type="AGR" id="MGI:1329019"/>
<dbReference type="CTD" id="13423"/>
<dbReference type="MGI" id="MGI:1329019">
    <property type="gene designation" value="Dnase2a"/>
</dbReference>
<dbReference type="VEuPathDB" id="HostDB:ENSMUSG00000003812"/>
<dbReference type="eggNOG" id="KOG3825">
    <property type="taxonomic scope" value="Eukaryota"/>
</dbReference>
<dbReference type="GeneTree" id="ENSGT00390000002634"/>
<dbReference type="HOGENOM" id="CLU_053867_0_0_1"/>
<dbReference type="InParanoid" id="P56542"/>
<dbReference type="OMA" id="EMYLLLE"/>
<dbReference type="OrthoDB" id="10261598at2759"/>
<dbReference type="PhylomeDB" id="P56542"/>
<dbReference type="TreeFam" id="TF314536"/>
<dbReference type="BRENDA" id="3.1.22.1">
    <property type="organism ID" value="3474"/>
</dbReference>
<dbReference type="Reactome" id="R-MMU-432720">
    <property type="pathway name" value="Lysosome Vesicle Biogenesis"/>
</dbReference>
<dbReference type="BioGRID-ORCS" id="13423">
    <property type="hits" value="1 hit in 77 CRISPR screens"/>
</dbReference>
<dbReference type="ChiTaRS" id="Dnase2a">
    <property type="organism name" value="mouse"/>
</dbReference>
<dbReference type="PRO" id="PR:P56542"/>
<dbReference type="Proteomes" id="UP000000589">
    <property type="component" value="Chromosome 8"/>
</dbReference>
<dbReference type="RNAct" id="P56542">
    <property type="molecule type" value="protein"/>
</dbReference>
<dbReference type="Bgee" id="ENSMUSG00000003812">
    <property type="expression patterns" value="Expressed in lip and 115 other cell types or tissues"/>
</dbReference>
<dbReference type="ExpressionAtlas" id="P56542">
    <property type="expression patterns" value="baseline and differential"/>
</dbReference>
<dbReference type="GO" id="GO:0005764">
    <property type="term" value="C:lysosome"/>
    <property type="evidence" value="ECO:0000304"/>
    <property type="project" value="MGI"/>
</dbReference>
<dbReference type="GO" id="GO:0004531">
    <property type="term" value="F:deoxyribonuclease II activity"/>
    <property type="evidence" value="ECO:0000314"/>
    <property type="project" value="MGI"/>
</dbReference>
<dbReference type="GO" id="GO:0006915">
    <property type="term" value="P:apoptotic process"/>
    <property type="evidence" value="ECO:0007669"/>
    <property type="project" value="UniProtKB-KW"/>
</dbReference>
<dbReference type="GO" id="GO:0006308">
    <property type="term" value="P:DNA catabolic process"/>
    <property type="evidence" value="ECO:0000315"/>
    <property type="project" value="MGI"/>
</dbReference>
<dbReference type="GO" id="GO:0043353">
    <property type="term" value="P:enucleate erythrocyte differentiation"/>
    <property type="evidence" value="ECO:0000315"/>
    <property type="project" value="MGI"/>
</dbReference>
<dbReference type="GO" id="GO:0050776">
    <property type="term" value="P:regulation of immune response"/>
    <property type="evidence" value="ECO:0000316"/>
    <property type="project" value="MGI"/>
</dbReference>
<dbReference type="InterPro" id="IPR004947">
    <property type="entry name" value="DNase_II"/>
</dbReference>
<dbReference type="PANTHER" id="PTHR10858">
    <property type="entry name" value="DEOXYRIBONUCLEASE II"/>
    <property type="match status" value="1"/>
</dbReference>
<dbReference type="PANTHER" id="PTHR10858:SF9">
    <property type="entry name" value="DEOXYRIBONUCLEASE-2-ALPHA"/>
    <property type="match status" value="1"/>
</dbReference>
<dbReference type="Pfam" id="PF03265">
    <property type="entry name" value="DNase_II"/>
    <property type="match status" value="1"/>
</dbReference>
<comment type="function">
    <text evidence="3 4">Hydrolyzes DNA under acidic conditions with a preference for double-stranded DNA. Plays a major role in the clearance of nucleic acids generated through apoptosis, hence preventing autoinflammation. Necessary for proper fetal development and for definitive erythropoiesis in fetal liver and bone marrow, where it degrades nuclear DNA expelled from erythroid precursor cells.</text>
</comment>
<comment type="catalytic activity">
    <reaction>
        <text>Endonucleolytic cleavage to nucleoside 3'-phosphates and 3'-phosphooligonucleotide end-products.</text>
        <dbReference type="EC" id="3.1.22.1"/>
    </reaction>
</comment>
<comment type="subcellular location">
    <subcellularLocation>
        <location>Lysosome</location>
    </subcellularLocation>
</comment>
<comment type="tissue specificity">
    <text evidence="3">Highly expressed in fetal liver macrophages.</text>
</comment>
<comment type="disease">
    <text evidence="3 4">Absence of Dnase2 is a cause of severe fetal anemia and of perinatal lethality due to malformation of the diaphragm.</text>
</comment>
<comment type="similarity">
    <text evidence="5">Belongs to the DNase II family.</text>
</comment>